<comment type="function">
    <text evidence="7 9">Plays an important role in the reorganization of the actin cytoskeleton. Binds to and sequesters actin monomers (G actin). Nucleates actin polymerization by assembling three actin monomers in cross-filament orientation and thereby promotes growth of actin filaments at the barbed end. Can also mediate actin depolymerization at barbed ends and severing of actin filaments. Promotes formation of cell ruffles. Regulates neuron morphogenesis and increases branching of axons and dendrites. Regulates dendrite branching in Purkinje cells.</text>
</comment>
<comment type="subunit">
    <text evidence="1 7 8 9">Identified in a complex composed of COBL, PACSIN1 and WASL. Interacts with PACSIN1, PACSIN2 and PACSIN3 (By similarity). Identified in a complex composed of ACTA1, COBL, GSN and TMSB4X. Interacts (via WH2 domains) with actin monomers. Interacts with DBNL.</text>
</comment>
<comment type="interaction">
    <interactant intactId="EBI-1550138">
        <id>Q5NBX1</id>
    </interactant>
    <interactant intactId="EBI-1550185">
        <id>Q9Z0W5</id>
        <label>Pacsin1</label>
    </interactant>
    <organismsDiffer>true</organismsDiffer>
    <experiments>14</experiments>
</comment>
<comment type="interaction">
    <interactant intactId="EBI-1550138">
        <id>Q5NBX1</id>
    </interactant>
    <interactant intactId="EBI-491201">
        <id>Q9QY17</id>
        <label>Pacsin2</label>
    </interactant>
    <organismsDiffer>true</organismsDiffer>
    <experiments>4</experiments>
</comment>
<comment type="interaction">
    <interactant intactId="EBI-1550138">
        <id>Q5NBX1</id>
    </interactant>
    <interactant intactId="EBI-7003023">
        <id>Q5I2Z0</id>
        <label>Pacsin3</label>
    </interactant>
    <organismsDiffer>true</organismsDiffer>
    <experiments>3</experiments>
</comment>
<comment type="interaction">
    <interactant intactId="EBI-16174243">
        <id>Q5NBX1-1</id>
    </interactant>
    <interactant intactId="EBI-397530">
        <id>P62161</id>
        <label>Calm3</label>
    </interactant>
    <organismsDiffer>true</organismsDiffer>
    <experiments>6</experiments>
</comment>
<comment type="interaction">
    <interactant intactId="EBI-16174243">
        <id>Q5NBX1-1</id>
    </interactant>
    <interactant intactId="EBI-1550185">
        <id>Q9Z0W5</id>
        <label>Pacsin1</label>
    </interactant>
    <organismsDiffer>true</organismsDiffer>
    <experiments>2</experiments>
</comment>
<comment type="subcellular location">
    <subcellularLocation>
        <location evidence="1">Cell membrane</location>
        <topology evidence="1">Peripheral membrane protein</topology>
        <orientation evidence="1">Cytoplasmic side</orientation>
    </subcellularLocation>
    <subcellularLocation>
        <location>Cytoplasm</location>
        <location>Cytoskeleton</location>
    </subcellularLocation>
    <subcellularLocation>
        <location>Cell projection</location>
        <location>Ruffle</location>
    </subcellularLocation>
    <subcellularLocation>
        <location>Cytoplasm</location>
    </subcellularLocation>
    <text evidence="1">Recruited to the cell membrane via interaction with PACSIN1 (By similarity). Colocalizes with the actin cytoskeleton. Detected throughout the neuron cell body, as well as in axons and dendrites.</text>
</comment>
<comment type="alternative products">
    <event type="alternative splicing"/>
    <isoform>
        <id>Q5NBX1-1</id>
        <name>1</name>
        <sequence type="displayed"/>
    </isoform>
    <isoform>
        <id>Q5NBX1-2</id>
        <name>2</name>
        <sequence type="described" ref="VSP_021615 VSP_021618"/>
    </isoform>
    <isoform>
        <id>Q5NBX1-3</id>
        <name>3</name>
        <sequence type="described" ref="VSP_021614"/>
    </isoform>
    <isoform>
        <id>Q5NBX1-4</id>
        <name>4</name>
        <sequence type="described" ref="VSP_021619 VSP_021620"/>
    </isoform>
    <isoform>
        <id>Q5NBX1-5</id>
        <name>5</name>
        <sequence type="described" ref="VSP_021616 VSP_021617"/>
    </isoform>
</comment>
<comment type="tissue specificity">
    <text evidence="6 7 9 10">Detected in brain cortex and in the Purkinje cell layer in the cerebellum. Detected in hippocampus neurons, and at lower levels in testis, lung and spleen (at protein level). Detected in embryonic neural tube.</text>
</comment>
<comment type="sequence caution" evidence="13">
    <conflict type="frameshift">
        <sequence resource="EMBL-CDS" id="AAH23264"/>
    </conflict>
</comment>
<comment type="sequence caution" evidence="13">
    <conflict type="erroneous initiation">
        <sequence resource="EMBL-CDS" id="BAC65616"/>
    </conflict>
    <text>Extended N-terminus.</text>
</comment>
<evidence type="ECO:0000250" key="1"/>
<evidence type="ECO:0000250" key="2">
    <source>
        <dbReference type="UniProtKB" id="D3ZUI5"/>
    </source>
</evidence>
<evidence type="ECO:0000250" key="3">
    <source>
        <dbReference type="UniProtKB" id="O75128"/>
    </source>
</evidence>
<evidence type="ECO:0000255" key="4">
    <source>
        <dbReference type="PROSITE-ProRule" id="PRU00406"/>
    </source>
</evidence>
<evidence type="ECO:0000256" key="5">
    <source>
        <dbReference type="SAM" id="MobiDB-lite"/>
    </source>
</evidence>
<evidence type="ECO:0000269" key="6">
    <source>
    </source>
</evidence>
<evidence type="ECO:0000269" key="7">
    <source>
    </source>
</evidence>
<evidence type="ECO:0000269" key="8">
    <source>
    </source>
</evidence>
<evidence type="ECO:0000269" key="9">
    <source>
    </source>
</evidence>
<evidence type="ECO:0000269" key="10">
    <source>
    </source>
</evidence>
<evidence type="ECO:0000303" key="11">
    <source>
    </source>
</evidence>
<evidence type="ECO:0000303" key="12">
    <source>
    </source>
</evidence>
<evidence type="ECO:0000305" key="13"/>
<evidence type="ECO:0007744" key="14">
    <source>
    </source>
</evidence>
<evidence type="ECO:0007829" key="15">
    <source>
        <dbReference type="PDB" id="4JHD"/>
    </source>
</evidence>
<evidence type="ECO:0007829" key="16">
    <source>
        <dbReference type="PDB" id="6JH9"/>
    </source>
</evidence>
<organism>
    <name type="scientific">Mus musculus</name>
    <name type="common">Mouse</name>
    <dbReference type="NCBI Taxonomy" id="10090"/>
    <lineage>
        <taxon>Eukaryota</taxon>
        <taxon>Metazoa</taxon>
        <taxon>Chordata</taxon>
        <taxon>Craniata</taxon>
        <taxon>Vertebrata</taxon>
        <taxon>Euteleostomi</taxon>
        <taxon>Mammalia</taxon>
        <taxon>Eutheria</taxon>
        <taxon>Euarchontoglires</taxon>
        <taxon>Glires</taxon>
        <taxon>Rodentia</taxon>
        <taxon>Myomorpha</taxon>
        <taxon>Muroidea</taxon>
        <taxon>Muridae</taxon>
        <taxon>Murinae</taxon>
        <taxon>Mus</taxon>
        <taxon>Mus</taxon>
    </lineage>
</organism>
<dbReference type="EMBL" id="AY308745">
    <property type="protein sequence ID" value="AAP74341.1"/>
    <property type="molecule type" value="mRNA"/>
</dbReference>
<dbReference type="EMBL" id="AK122334">
    <property type="protein sequence ID" value="BAC65616.1"/>
    <property type="status" value="ALT_INIT"/>
    <property type="molecule type" value="mRNA"/>
</dbReference>
<dbReference type="EMBL" id="AK028833">
    <property type="protein sequence ID" value="BAC26144.1"/>
    <property type="molecule type" value="mRNA"/>
</dbReference>
<dbReference type="EMBL" id="AK049730">
    <property type="protein sequence ID" value="BAC33896.1"/>
    <property type="molecule type" value="mRNA"/>
</dbReference>
<dbReference type="EMBL" id="AL669822">
    <property type="status" value="NOT_ANNOTATED_CDS"/>
    <property type="molecule type" value="Genomic_DNA"/>
</dbReference>
<dbReference type="EMBL" id="AL713914">
    <property type="status" value="NOT_ANNOTATED_CDS"/>
    <property type="molecule type" value="Genomic_DNA"/>
</dbReference>
<dbReference type="EMBL" id="BC023264">
    <property type="protein sequence ID" value="AAH23264.1"/>
    <property type="status" value="ALT_FRAME"/>
    <property type="molecule type" value="mRNA"/>
</dbReference>
<dbReference type="EMBL" id="BC060061">
    <property type="protein sequence ID" value="AAH60061.1"/>
    <property type="molecule type" value="mRNA"/>
</dbReference>
<dbReference type="EMBL" id="U26967">
    <property type="protein sequence ID" value="AAA92362.1"/>
    <property type="molecule type" value="mRNA"/>
</dbReference>
<dbReference type="CCDS" id="CCDS36113.1">
    <molecule id="Q5NBX1-1"/>
</dbReference>
<dbReference type="RefSeq" id="NP_001388026.1">
    <molecule id="Q5NBX1-2"/>
    <property type="nucleotide sequence ID" value="NM_001401097.1"/>
</dbReference>
<dbReference type="RefSeq" id="NP_766084.3">
    <molecule id="Q5NBX1-1"/>
    <property type="nucleotide sequence ID" value="NM_172496.3"/>
</dbReference>
<dbReference type="RefSeq" id="XP_006514548.1">
    <property type="nucleotide sequence ID" value="XM_006514485.3"/>
</dbReference>
<dbReference type="PDB" id="3TU5">
    <property type="method" value="X-ray"/>
    <property type="resolution" value="3.00 A"/>
    <property type="chains" value="B=1201-1332"/>
</dbReference>
<dbReference type="PDB" id="4JHD">
    <property type="method" value="X-ray"/>
    <property type="resolution" value="2.91 A"/>
    <property type="chains" value="C/F=1176-1337"/>
</dbReference>
<dbReference type="PDB" id="5YPU">
    <property type="method" value="X-ray"/>
    <property type="resolution" value="2.00 A"/>
    <property type="chains" value="B/D=1184-1204"/>
</dbReference>
<dbReference type="PDB" id="6JBK">
    <property type="method" value="X-ray"/>
    <property type="resolution" value="2.45 A"/>
    <property type="chains" value="B/D/F/H=1184-1205"/>
</dbReference>
<dbReference type="PDB" id="6JCU">
    <property type="method" value="X-ray"/>
    <property type="resolution" value="2.30 A"/>
    <property type="chains" value="B/D=1184-1205"/>
</dbReference>
<dbReference type="PDB" id="6JH8">
    <property type="method" value="X-ray"/>
    <property type="resolution" value="2.15 A"/>
    <property type="chains" value="B=1183-1205"/>
</dbReference>
<dbReference type="PDB" id="6JH9">
    <property type="method" value="X-ray"/>
    <property type="resolution" value="1.74 A"/>
    <property type="chains" value="B=1183-1205"/>
</dbReference>
<dbReference type="PDBsum" id="3TU5"/>
<dbReference type="PDBsum" id="4JHD"/>
<dbReference type="PDBsum" id="5YPU"/>
<dbReference type="PDBsum" id="6JBK"/>
<dbReference type="PDBsum" id="6JCU"/>
<dbReference type="PDBsum" id="6JH8"/>
<dbReference type="PDBsum" id="6JH9"/>
<dbReference type="SMR" id="Q5NBX1"/>
<dbReference type="BioGRID" id="198800">
    <property type="interactions" value="2"/>
</dbReference>
<dbReference type="DIP" id="DIP-39834N"/>
<dbReference type="FunCoup" id="Q5NBX1">
    <property type="interactions" value="262"/>
</dbReference>
<dbReference type="IntAct" id="Q5NBX1">
    <property type="interactions" value="7"/>
</dbReference>
<dbReference type="MINT" id="Q5NBX1"/>
<dbReference type="STRING" id="10090.ENSMUSP00000045693"/>
<dbReference type="GlyGen" id="Q5NBX1">
    <property type="glycosylation" value="5 sites, 3 N-linked glycans (3 sites), 1 O-linked glycan (2 sites)"/>
</dbReference>
<dbReference type="iPTMnet" id="Q5NBX1"/>
<dbReference type="PhosphoSitePlus" id="Q5NBX1"/>
<dbReference type="jPOST" id="Q5NBX1"/>
<dbReference type="PaxDb" id="10090-ENSMUSP00000045693"/>
<dbReference type="PeptideAtlas" id="Q5NBX1"/>
<dbReference type="ProteomicsDB" id="283337">
    <molecule id="Q5NBX1-1"/>
</dbReference>
<dbReference type="ProteomicsDB" id="283338">
    <molecule id="Q5NBX1-2"/>
</dbReference>
<dbReference type="ProteomicsDB" id="283339">
    <molecule id="Q5NBX1-3"/>
</dbReference>
<dbReference type="ProteomicsDB" id="283340">
    <molecule id="Q5NBX1-4"/>
</dbReference>
<dbReference type="ProteomicsDB" id="283341">
    <molecule id="Q5NBX1-5"/>
</dbReference>
<dbReference type="Antibodypedia" id="13730">
    <property type="antibodies" value="100 antibodies from 15 providers"/>
</dbReference>
<dbReference type="DNASU" id="12808"/>
<dbReference type="Ensembl" id="ENSMUST00000046755.14">
    <molecule id="Q5NBX1-1"/>
    <property type="protein sequence ID" value="ENSMUSP00000045693.8"/>
    <property type="gene ID" value="ENSMUSG00000020173.18"/>
</dbReference>
<dbReference type="Ensembl" id="ENSMUST00000109650.8">
    <molecule id="Q5NBX1-2"/>
    <property type="protein sequence ID" value="ENSMUSP00000105277.2"/>
    <property type="gene ID" value="ENSMUSG00000020173.18"/>
</dbReference>
<dbReference type="Ensembl" id="ENSMUST00000172919.8">
    <molecule id="Q5NBX1-5"/>
    <property type="protein sequence ID" value="ENSMUSP00000133669.2"/>
    <property type="gene ID" value="ENSMUSG00000020173.18"/>
</dbReference>
<dbReference type="GeneID" id="12808"/>
<dbReference type="KEGG" id="mmu:12808"/>
<dbReference type="UCSC" id="uc007ibd.2">
    <molecule id="Q5NBX1-1"/>
    <property type="organism name" value="mouse"/>
</dbReference>
<dbReference type="UCSC" id="uc007ibf.2">
    <molecule id="Q5NBX1-4"/>
    <property type="organism name" value="mouse"/>
</dbReference>
<dbReference type="UCSC" id="uc011xrq.1">
    <molecule id="Q5NBX1-5"/>
    <property type="organism name" value="mouse"/>
</dbReference>
<dbReference type="AGR" id="MGI:105056"/>
<dbReference type="CTD" id="23242"/>
<dbReference type="MGI" id="MGI:105056">
    <property type="gene designation" value="Cobl"/>
</dbReference>
<dbReference type="VEuPathDB" id="HostDB:ENSMUSG00000020173"/>
<dbReference type="eggNOG" id="ENOG502QTAY">
    <property type="taxonomic scope" value="Eukaryota"/>
</dbReference>
<dbReference type="GeneTree" id="ENSGT00530000063608"/>
<dbReference type="HOGENOM" id="CLU_045340_1_0_1"/>
<dbReference type="InParanoid" id="Q5NBX1"/>
<dbReference type="OMA" id="RENMFES"/>
<dbReference type="OrthoDB" id="8882621at2759"/>
<dbReference type="PhylomeDB" id="Q5NBX1"/>
<dbReference type="TreeFam" id="TF333490"/>
<dbReference type="BioGRID-ORCS" id="12808">
    <property type="hits" value="1 hit in 77 CRISPR screens"/>
</dbReference>
<dbReference type="CD-CODE" id="7B858B7A">
    <property type="entry name" value="Actin nucleator"/>
</dbReference>
<dbReference type="CD-CODE" id="CE726F99">
    <property type="entry name" value="Postsynaptic density"/>
</dbReference>
<dbReference type="EvolutionaryTrace" id="Q5NBX1"/>
<dbReference type="PRO" id="PR:Q5NBX1"/>
<dbReference type="Proteomes" id="UP000000589">
    <property type="component" value="Chromosome 11"/>
</dbReference>
<dbReference type="RNAct" id="Q5NBX1">
    <property type="molecule type" value="protein"/>
</dbReference>
<dbReference type="Bgee" id="ENSMUSG00000020173">
    <property type="expression patterns" value="Expressed in hindlimb stylopod muscle and 214 other cell types or tissues"/>
</dbReference>
<dbReference type="ExpressionAtlas" id="Q5NBX1">
    <property type="expression patterns" value="baseline and differential"/>
</dbReference>
<dbReference type="GO" id="GO:0030424">
    <property type="term" value="C:axon"/>
    <property type="evidence" value="ECO:0000314"/>
    <property type="project" value="BHF-UCL"/>
</dbReference>
<dbReference type="GO" id="GO:0044295">
    <property type="term" value="C:axonal growth cone"/>
    <property type="evidence" value="ECO:0000314"/>
    <property type="project" value="BHF-UCL"/>
</dbReference>
<dbReference type="GO" id="GO:0005938">
    <property type="term" value="C:cell cortex"/>
    <property type="evidence" value="ECO:0000314"/>
    <property type="project" value="BHF-UCL"/>
</dbReference>
<dbReference type="GO" id="GO:0005856">
    <property type="term" value="C:cytoskeleton"/>
    <property type="evidence" value="ECO:0007669"/>
    <property type="project" value="UniProtKB-SubCell"/>
</dbReference>
<dbReference type="GO" id="GO:0030425">
    <property type="term" value="C:dendrite"/>
    <property type="evidence" value="ECO:0000314"/>
    <property type="project" value="BHF-UCL"/>
</dbReference>
<dbReference type="GO" id="GO:0044294">
    <property type="term" value="C:dendritic growth cone"/>
    <property type="evidence" value="ECO:0000314"/>
    <property type="project" value="BHF-UCL"/>
</dbReference>
<dbReference type="GO" id="GO:0016020">
    <property type="term" value="C:membrane"/>
    <property type="evidence" value="ECO:0000314"/>
    <property type="project" value="BHF-UCL"/>
</dbReference>
<dbReference type="GO" id="GO:0043025">
    <property type="term" value="C:neuronal cell body"/>
    <property type="evidence" value="ECO:0000314"/>
    <property type="project" value="BHF-UCL"/>
</dbReference>
<dbReference type="GO" id="GO:0048471">
    <property type="term" value="C:perinuclear region of cytoplasm"/>
    <property type="evidence" value="ECO:0000314"/>
    <property type="project" value="BHF-UCL"/>
</dbReference>
<dbReference type="GO" id="GO:0005886">
    <property type="term" value="C:plasma membrane"/>
    <property type="evidence" value="ECO:0007669"/>
    <property type="project" value="UniProtKB-SubCell"/>
</dbReference>
<dbReference type="GO" id="GO:0001726">
    <property type="term" value="C:ruffle"/>
    <property type="evidence" value="ECO:0000314"/>
    <property type="project" value="BHF-UCL"/>
</dbReference>
<dbReference type="GO" id="GO:0003785">
    <property type="term" value="F:actin monomer binding"/>
    <property type="evidence" value="ECO:0000314"/>
    <property type="project" value="BHF-UCL"/>
</dbReference>
<dbReference type="GO" id="GO:0051764">
    <property type="term" value="P:actin crosslink formation"/>
    <property type="evidence" value="ECO:0000303"/>
    <property type="project" value="BHF-UCL"/>
</dbReference>
<dbReference type="GO" id="GO:0030036">
    <property type="term" value="P:actin cytoskeleton organization"/>
    <property type="evidence" value="ECO:0000315"/>
    <property type="project" value="MGI"/>
</dbReference>
<dbReference type="GO" id="GO:0051639">
    <property type="term" value="P:actin filament network formation"/>
    <property type="evidence" value="ECO:0000314"/>
    <property type="project" value="BHF-UCL"/>
</dbReference>
<dbReference type="GO" id="GO:0030041">
    <property type="term" value="P:actin filament polymerization"/>
    <property type="evidence" value="ECO:0000315"/>
    <property type="project" value="BHF-UCL"/>
</dbReference>
<dbReference type="GO" id="GO:0048669">
    <property type="term" value="P:collateral sprouting in absence of injury"/>
    <property type="evidence" value="ECO:0000315"/>
    <property type="project" value="BHF-UCL"/>
</dbReference>
<dbReference type="GO" id="GO:0048565">
    <property type="term" value="P:digestive tract development"/>
    <property type="evidence" value="ECO:0000270"/>
    <property type="project" value="BHF-UCL"/>
</dbReference>
<dbReference type="GO" id="GO:0000578">
    <property type="term" value="P:embryonic axis specification"/>
    <property type="evidence" value="ECO:0000270"/>
    <property type="project" value="BHF-UCL"/>
</dbReference>
<dbReference type="GO" id="GO:0033504">
    <property type="term" value="P:floor plate development"/>
    <property type="evidence" value="ECO:0000270"/>
    <property type="project" value="BHF-UCL"/>
</dbReference>
<dbReference type="GO" id="GO:0001889">
    <property type="term" value="P:liver development"/>
    <property type="evidence" value="ECO:0000270"/>
    <property type="project" value="BHF-UCL"/>
</dbReference>
<dbReference type="GO" id="GO:0001843">
    <property type="term" value="P:neural tube closure"/>
    <property type="evidence" value="ECO:0000316"/>
    <property type="project" value="MGI"/>
</dbReference>
<dbReference type="GO" id="GO:0030903">
    <property type="term" value="P:notochord development"/>
    <property type="evidence" value="ECO:0000270"/>
    <property type="project" value="BHF-UCL"/>
</dbReference>
<dbReference type="GO" id="GO:1900006">
    <property type="term" value="P:positive regulation of dendrite development"/>
    <property type="evidence" value="ECO:0000314"/>
    <property type="project" value="BHF-UCL"/>
</dbReference>
<dbReference type="GO" id="GO:1900029">
    <property type="term" value="P:positive regulation of ruffle assembly"/>
    <property type="evidence" value="ECO:0000314"/>
    <property type="project" value="BHF-UCL"/>
</dbReference>
<dbReference type="GO" id="GO:0001757">
    <property type="term" value="P:somite specification"/>
    <property type="evidence" value="ECO:0000270"/>
    <property type="project" value="BHF-UCL"/>
</dbReference>
<dbReference type="CDD" id="cd21799">
    <property type="entry name" value="WH2_Wa_Cobl"/>
    <property type="match status" value="1"/>
</dbReference>
<dbReference type="CDD" id="cd21800">
    <property type="entry name" value="WH2_Wb_Cobl"/>
    <property type="match status" value="1"/>
</dbReference>
<dbReference type="CDD" id="cd21801">
    <property type="entry name" value="WH2_Wc_Cobl"/>
    <property type="match status" value="1"/>
</dbReference>
<dbReference type="FunFam" id="3.10.20.90:FF:000065">
    <property type="entry name" value="Cordon-bleu WH2 repeat protein"/>
    <property type="match status" value="1"/>
</dbReference>
<dbReference type="Gene3D" id="3.10.20.90">
    <property type="entry name" value="Phosphatidylinositol 3-kinase Catalytic Subunit, Chain A, domain 1"/>
    <property type="match status" value="1"/>
</dbReference>
<dbReference type="InterPro" id="IPR039895">
    <property type="entry name" value="COBL-like"/>
</dbReference>
<dbReference type="InterPro" id="IPR019025">
    <property type="entry name" value="Cordon-bleu_ubiquitin_domain"/>
</dbReference>
<dbReference type="InterPro" id="IPR003124">
    <property type="entry name" value="WH2_dom"/>
</dbReference>
<dbReference type="PANTHER" id="PTHR47008">
    <property type="entry name" value="PROTEIN CORDON-BLEU"/>
    <property type="match status" value="1"/>
</dbReference>
<dbReference type="PANTHER" id="PTHR47008:SF1">
    <property type="entry name" value="PROTEIN CORDON-BLEU"/>
    <property type="match status" value="1"/>
</dbReference>
<dbReference type="Pfam" id="PF09469">
    <property type="entry name" value="Cobl"/>
    <property type="match status" value="1"/>
</dbReference>
<dbReference type="Pfam" id="PF02205">
    <property type="entry name" value="WH2"/>
    <property type="match status" value="3"/>
</dbReference>
<dbReference type="SMART" id="SM00246">
    <property type="entry name" value="WH2"/>
    <property type="match status" value="3"/>
</dbReference>
<dbReference type="PROSITE" id="PS51082">
    <property type="entry name" value="WH2"/>
    <property type="match status" value="3"/>
</dbReference>
<sequence length="1337" mass="143865">MDAPRALAAKPPTGRKMKARAPPPPGKPAAQNVHSEQKLPHDATLGSQQSLVYMKEALQNSTLDITVVLPSGLEKQSVVSGSHAMMDLLVELCLQNHLNPSHHVLEIWSSETQQPLSFKPNTLIGSLNVHTVLLKEKVPEERVKPGLTKAPEKSVRLVVNYLRTQKAVVRVSPEVPLQNILPVICAKCEVNPEHVILLRDNVAGEELELSKSLNELGIKELYAWDNRREMFRKSSLGNDETDKEKKKFLGFFKANKRSNSKAEHLGLSGADSDEDPAKSASGGDLNGCVTTPNSPSLHSRSLTLGPSLSLGNISGVSMKSDMKKRRAPPPPSPKLLGQDKVSEKASLSSQADLQKKKRRAPAPPPPQQPPPSPVVPNRKEDKEENRKSTVGVGRQVPQKPPRGTARGPPQLVLPPPPPYPPPDTDVTEPVTFPGEGAGSETSELRPKLSLPLGPGSHCSMGGVSQVPAESEETASEDTTEDSGVMSSPSDAISLDSQQDSMRSKDKWSTDQEDGSDQDLAGTPELGPQKSPSWGKSGSGSSILRTEKATMPTNDDEDLFITGHLHQTLAELDEDLEGMEENYETDTSSLTNSVNGVSNHSLQEAIIPDSGVDDIPVTFIGEVSDEPFDSGLFSSRCNNATTFNTGSIASQRSHLSPSQTEHSQPFVRTSRKEPDPSPPSQDNRKRNQPTLANTSENENPVETDPTVTSLVSKLLIDDPKAKDKGKVHGSSHSEKTQAGHGINSLRVNPRDGKDESSNSAPPPWSHHGQALGGSYGLKYGLTTYKIVPPKSEMRCYDRDVSLSTGAIKIDELGNLVSPHMNGSRTISPPSAVVETDTPPIGKVKEFWRRNSMEKYLNGPAECTIKRAPSTTITATPEKPQQDNGMKAAFTVTTPQQQPASQEYGAHLEEERSRPQSAVSCSVKVPASNPTDITFLKPQRRTSSQYVASAIAKKMGPPKVHADVVRPHKATTEQCHEEAKLARSPPTRKDDAAPNLHSEARQHEHGTNQSSVCLPSNPGVQLPAGGHPKVEVNSTYGKSSTQDYPAAVHRNSYFLPGRSSHRDRVSVGQSCGFNEKQTTSNQKANSTSNFSQALDKAHPPPLLLAEARDSGRILMNGSARTPGNCEPPHSPKESTLTSYIILQTEEKPSSLSTDGQDADDTLPSSIFGPKKKFKPVIQRPLPKDVSLHSALMEAIHSSGGREKLRKTAEQTSEGRPKKPSYVEAESERSALLAAIRGHSGTLSLRKVSSLASEELQSFRNAALGAPGLDKPQQEDLGLPPPPALPPPPAPAPQAPSASVTVSRFSTGTPSNSVNARQALMDAIRSGTGAARLRKVPLLV</sequence>
<proteinExistence type="evidence at protein level"/>
<keyword id="KW-0002">3D-structure</keyword>
<keyword id="KW-0009">Actin-binding</keyword>
<keyword id="KW-0025">Alternative splicing</keyword>
<keyword id="KW-1003">Cell membrane</keyword>
<keyword id="KW-0966">Cell projection</keyword>
<keyword id="KW-0963">Cytoplasm</keyword>
<keyword id="KW-0206">Cytoskeleton</keyword>
<keyword id="KW-0472">Membrane</keyword>
<keyword id="KW-0597">Phosphoprotein</keyword>
<keyword id="KW-1185">Reference proteome</keyword>
<keyword id="KW-0677">Repeat</keyword>
<feature type="chain" id="PRO_0000260492" description="Protein cordon-bleu">
    <location>
        <begin position="1"/>
        <end position="1337"/>
    </location>
</feature>
<feature type="domain" description="WH2 1" evidence="4">
    <location>
        <begin position="1185"/>
        <end position="1205"/>
    </location>
</feature>
<feature type="domain" description="WH2 2" evidence="4">
    <location>
        <begin position="1225"/>
        <end position="1245"/>
    </location>
</feature>
<feature type="domain" description="WH2 3" evidence="4">
    <location>
        <begin position="1313"/>
        <end position="1333"/>
    </location>
</feature>
<feature type="region of interest" description="Disordered" evidence="5">
    <location>
        <begin position="1"/>
        <end position="41"/>
    </location>
</feature>
<feature type="region of interest" description="Disordered" evidence="5">
    <location>
        <begin position="260"/>
        <end position="556"/>
    </location>
</feature>
<feature type="region of interest" description="Disordered" evidence="5">
    <location>
        <begin position="647"/>
        <end position="768"/>
    </location>
</feature>
<feature type="region of interest" description="Disordered" evidence="5">
    <location>
        <begin position="892"/>
        <end position="923"/>
    </location>
</feature>
<feature type="region of interest" description="Disordered" evidence="5">
    <location>
        <begin position="967"/>
        <end position="991"/>
    </location>
</feature>
<feature type="region of interest" description="Disordered" evidence="5">
    <location>
        <begin position="1070"/>
        <end position="1094"/>
    </location>
</feature>
<feature type="region of interest" description="Disordered" evidence="5">
    <location>
        <begin position="1113"/>
        <end position="1133"/>
    </location>
</feature>
<feature type="region of interest" description="Disordered" evidence="5">
    <location>
        <begin position="1145"/>
        <end position="1168"/>
    </location>
</feature>
<feature type="region of interest" description="Disordered" evidence="5">
    <location>
        <begin position="1192"/>
        <end position="1221"/>
    </location>
</feature>
<feature type="region of interest" description="Disordered" evidence="5">
    <location>
        <begin position="1262"/>
        <end position="1310"/>
    </location>
</feature>
<feature type="short sequence motif" description="KKRRAP 1">
    <location>
        <begin position="323"/>
        <end position="328"/>
    </location>
</feature>
<feature type="short sequence motif" description="KKRRAP 2">
    <location>
        <begin position="356"/>
        <end position="361"/>
    </location>
</feature>
<feature type="compositionally biased region" description="Polar residues" evidence="5">
    <location>
        <begin position="288"/>
        <end position="317"/>
    </location>
</feature>
<feature type="compositionally biased region" description="Pro residues" evidence="5">
    <location>
        <begin position="361"/>
        <end position="374"/>
    </location>
</feature>
<feature type="compositionally biased region" description="Basic and acidic residues" evidence="5">
    <location>
        <begin position="377"/>
        <end position="387"/>
    </location>
</feature>
<feature type="compositionally biased region" description="Pro residues" evidence="5">
    <location>
        <begin position="411"/>
        <end position="423"/>
    </location>
</feature>
<feature type="compositionally biased region" description="Acidic residues" evidence="5">
    <location>
        <begin position="469"/>
        <end position="480"/>
    </location>
</feature>
<feature type="compositionally biased region" description="Polar residues" evidence="5">
    <location>
        <begin position="484"/>
        <end position="500"/>
    </location>
</feature>
<feature type="compositionally biased region" description="Low complexity" evidence="5">
    <location>
        <begin position="526"/>
        <end position="541"/>
    </location>
</feature>
<feature type="compositionally biased region" description="Polar residues" evidence="5">
    <location>
        <begin position="647"/>
        <end position="666"/>
    </location>
</feature>
<feature type="compositionally biased region" description="Polar residues" evidence="5">
    <location>
        <begin position="687"/>
        <end position="710"/>
    </location>
</feature>
<feature type="compositionally biased region" description="Basic and acidic residues" evidence="5">
    <location>
        <begin position="714"/>
        <end position="736"/>
    </location>
</feature>
<feature type="compositionally biased region" description="Polar residues" evidence="5">
    <location>
        <begin position="1070"/>
        <end position="1090"/>
    </location>
</feature>
<feature type="compositionally biased region" description="Basic and acidic residues" evidence="5">
    <location>
        <begin position="1197"/>
        <end position="1214"/>
    </location>
</feature>
<feature type="compositionally biased region" description="Pro residues" evidence="5">
    <location>
        <begin position="1276"/>
        <end position="1291"/>
    </location>
</feature>
<feature type="compositionally biased region" description="Polar residues" evidence="5">
    <location>
        <begin position="1297"/>
        <end position="1310"/>
    </location>
</feature>
<feature type="modified residue" description="Phosphoserine" evidence="14">
    <location>
        <position position="47"/>
    </location>
</feature>
<feature type="modified residue" description="Phosphoserine" evidence="14">
    <location>
        <position position="50"/>
    </location>
</feature>
<feature type="modified residue" description="Phosphoserine" evidence="2">
    <location>
        <position position="212"/>
    </location>
</feature>
<feature type="modified residue" description="Phosphoserine" evidence="2">
    <location>
        <position position="235"/>
    </location>
</feature>
<feature type="modified residue" description="Phosphoserine" evidence="14">
    <location>
        <position position="272"/>
    </location>
</feature>
<feature type="modified residue" description="Phosphoserine" evidence="3">
    <location>
        <position position="294"/>
    </location>
</feature>
<feature type="modified residue" description="Phosphoserine" evidence="2">
    <location>
        <position position="346"/>
    </location>
</feature>
<feature type="modified residue" description="Phosphoserine" evidence="3">
    <location>
        <position position="349"/>
    </location>
</feature>
<feature type="modified residue" description="Phosphoserine" evidence="3">
    <location>
        <position position="372"/>
    </location>
</feature>
<feature type="modified residue" description="Phosphothreonine" evidence="14">
    <location>
        <position position="522"/>
    </location>
</feature>
<feature type="modified residue" description="Phosphoserine" evidence="3">
    <location>
        <position position="649"/>
    </location>
</feature>
<feature type="modified residue" description="Phosphoserine" evidence="3">
    <location>
        <position position="816"/>
    </location>
</feature>
<feature type="modified residue" description="Phosphoserine" evidence="3">
    <location>
        <position position="1038"/>
    </location>
</feature>
<feature type="modified residue" description="Phosphoserine" evidence="14">
    <location>
        <position position="1128"/>
    </location>
</feature>
<feature type="modified residue" description="Phosphoserine" evidence="3">
    <location>
        <position position="1303"/>
    </location>
</feature>
<feature type="splice variant" id="VSP_021614" description="In isoform 3." evidence="11">
    <location>
        <begin position="1"/>
        <end position="16"/>
    </location>
</feature>
<feature type="splice variant" id="VSP_021615" description="In isoform 2." evidence="13">
    <location>
        <begin position="262"/>
        <end position="286"/>
    </location>
</feature>
<feature type="splice variant" id="VSP_021616" description="In isoform 5." evidence="12">
    <original>ASLSS</original>
    <variation>VPLLV</variation>
    <location>
        <begin position="345"/>
        <end position="349"/>
    </location>
</feature>
<feature type="splice variant" id="VSP_021617" description="In isoform 5." evidence="12">
    <location>
        <begin position="350"/>
        <end position="1337"/>
    </location>
</feature>
<feature type="splice variant" id="VSP_021618" description="In isoform 2." evidence="13">
    <original>GVGRQVPQKPPRGTARGPPQLVLPPPPPYPPPDTDVTEPVTFPGEGAGSETSELRPKL</original>
    <variation>V</variation>
    <location>
        <begin position="391"/>
        <end position="448"/>
    </location>
</feature>
<feature type="splice variant" id="VSP_021619" description="In isoform 4." evidence="12">
    <original>LSLPLGPGSHCSMGGVSQVPAE</original>
    <variation>RTCLLLPFQLCVDHLSFWSLLV</variation>
    <location>
        <begin position="448"/>
        <end position="469"/>
    </location>
</feature>
<feature type="splice variant" id="VSP_021620" description="In isoform 4." evidence="12">
    <location>
        <begin position="470"/>
        <end position="1337"/>
    </location>
</feature>
<feature type="sequence conflict" description="In Ref. 3; BAC33896." evidence="13" ref="3">
    <original>K</original>
    <variation>Q</variation>
    <location>
        <position position="10"/>
    </location>
</feature>
<feature type="sequence conflict" description="In Ref. 3; BAC33896." evidence="13" ref="3">
    <original>K</original>
    <variation>R</variation>
    <location>
        <position position="18"/>
    </location>
</feature>
<feature type="sequence conflict" description="In Ref. 3; BAC26144." evidence="13" ref="3">
    <original>L</original>
    <variation>M</variation>
    <location>
        <position position="45"/>
    </location>
</feature>
<feature type="sequence conflict" description="In Ref. 1; AAP74341." evidence="13" ref="1">
    <original>T</original>
    <variation>N</variation>
    <location>
        <position position="112"/>
    </location>
</feature>
<feature type="sequence conflict" description="In Ref. 3; BAC26144." evidence="13" ref="3">
    <original>N</original>
    <variation>S</variation>
    <location>
        <position position="128"/>
    </location>
</feature>
<feature type="sequence conflict" description="In Ref. 1; AAP74341." evidence="13" ref="1">
    <original>L</original>
    <variation>F</variation>
    <location>
        <position position="801"/>
    </location>
</feature>
<feature type="sequence conflict" description="In Ref. 4; BAC65616." evidence="13" ref="4">
    <original>Q</original>
    <variation>R</variation>
    <location>
        <position position="914"/>
    </location>
</feature>
<feature type="sequence conflict" description="In Ref. 5; AAH23264." evidence="13" ref="5">
    <original>V</original>
    <variation>I</variation>
    <location>
        <position position="1010"/>
    </location>
</feature>
<feature type="sequence conflict" description="In Ref. 5; AAH23264." evidence="13" ref="5">
    <original>L</original>
    <variation>V</variation>
    <location>
        <position position="1112"/>
    </location>
</feature>
<feature type="sequence conflict" description="In Ref. 1; AAP74341." evidence="13" ref="1">
    <original>T</original>
    <variation>V</variation>
    <location>
        <position position="1205"/>
    </location>
</feature>
<feature type="sequence conflict" description="In Ref. 1; AAP74341 and 5; AAH23264." evidence="13" ref="1 5">
    <original>P</original>
    <variation>T</variation>
    <location>
        <position position="1285"/>
    </location>
</feature>
<feature type="helix" evidence="16">
    <location>
        <begin position="1185"/>
        <end position="1194"/>
    </location>
</feature>
<feature type="turn" evidence="15">
    <location>
        <begin position="1195"/>
        <end position="1197"/>
    </location>
</feature>
<feature type="helix" evidence="16">
    <location>
        <begin position="1198"/>
        <end position="1201"/>
    </location>
</feature>
<feature type="strand" evidence="15">
    <location>
        <begin position="1202"/>
        <end position="1205"/>
    </location>
</feature>
<feature type="helix" evidence="15">
    <location>
        <begin position="1222"/>
        <end position="1235"/>
    </location>
</feature>
<feature type="turn" evidence="15">
    <location>
        <begin position="1248"/>
        <end position="1250"/>
    </location>
</feature>
<feature type="helix" evidence="15">
    <location>
        <begin position="1251"/>
        <end position="1254"/>
    </location>
</feature>
<accession>Q5NBX1</accession>
<accession>Q5NBX2</accession>
<accession>Q60859</accession>
<accession>Q6PAT4</accession>
<accession>Q7TQM9</accession>
<accession>Q80TV4</accession>
<accession>Q8C7Q0</accession>
<accession>Q8CE81</accession>
<accession>Q8CIM4</accession>
<name>COBL_MOUSE</name>
<reference key="1">
    <citation type="journal article" date="2003" name="Dev. Biol.">
        <title>Cordon-bleu is a conserved gene involved in neural tube formation.</title>
        <authorList>
            <person name="Carroll E.A."/>
            <person name="Gerrelli D."/>
            <person name="Gasca S."/>
            <person name="Berg E."/>
            <person name="Beier D.R."/>
            <person name="Copp A.J."/>
            <person name="Klingensmith J."/>
        </authorList>
    </citation>
    <scope>NUCLEOTIDE SEQUENCE [MRNA] (ISOFORM 1)</scope>
    <scope>TISSUE SPECIFICITY</scope>
    <source>
        <strain>CD-1</strain>
        <tissue>Brain</tissue>
    </source>
</reference>
<reference key="2">
    <citation type="journal article" date="2003" name="DNA Res.">
        <title>Prediction of the coding sequences of mouse homologues of KIAA gene: II. The complete nucleotide sequences of 400 mouse KIAA-homologous cDNAs identified by screening of terminal sequences of cDNA clones randomly sampled from size-fractionated libraries.</title>
        <authorList>
            <person name="Okazaki N."/>
            <person name="Kikuno R."/>
            <person name="Ohara R."/>
            <person name="Inamoto S."/>
            <person name="Aizawa H."/>
            <person name="Yuasa S."/>
            <person name="Nakajima D."/>
            <person name="Nagase T."/>
            <person name="Ohara O."/>
            <person name="Koga H."/>
        </authorList>
    </citation>
    <scope>NUCLEOTIDE SEQUENCE [LARGE SCALE MRNA] (ISOFORM 3)</scope>
    <source>
        <tissue>Brain</tissue>
    </source>
</reference>
<reference key="3">
    <citation type="journal article" date="2005" name="Science">
        <title>The transcriptional landscape of the mammalian genome.</title>
        <authorList>
            <person name="Carninci P."/>
            <person name="Kasukawa T."/>
            <person name="Katayama S."/>
            <person name="Gough J."/>
            <person name="Frith M.C."/>
            <person name="Maeda N."/>
            <person name="Oyama R."/>
            <person name="Ravasi T."/>
            <person name="Lenhard B."/>
            <person name="Wells C."/>
            <person name="Kodzius R."/>
            <person name="Shimokawa K."/>
            <person name="Bajic V.B."/>
            <person name="Brenner S.E."/>
            <person name="Batalov S."/>
            <person name="Forrest A.R."/>
            <person name="Zavolan M."/>
            <person name="Davis M.J."/>
            <person name="Wilming L.G."/>
            <person name="Aidinis V."/>
            <person name="Allen J.E."/>
            <person name="Ambesi-Impiombato A."/>
            <person name="Apweiler R."/>
            <person name="Aturaliya R.N."/>
            <person name="Bailey T.L."/>
            <person name="Bansal M."/>
            <person name="Baxter L."/>
            <person name="Beisel K.W."/>
            <person name="Bersano T."/>
            <person name="Bono H."/>
            <person name="Chalk A.M."/>
            <person name="Chiu K.P."/>
            <person name="Choudhary V."/>
            <person name="Christoffels A."/>
            <person name="Clutterbuck D.R."/>
            <person name="Crowe M.L."/>
            <person name="Dalla E."/>
            <person name="Dalrymple B.P."/>
            <person name="de Bono B."/>
            <person name="Della Gatta G."/>
            <person name="di Bernardo D."/>
            <person name="Down T."/>
            <person name="Engstrom P."/>
            <person name="Fagiolini M."/>
            <person name="Faulkner G."/>
            <person name="Fletcher C.F."/>
            <person name="Fukushima T."/>
            <person name="Furuno M."/>
            <person name="Futaki S."/>
            <person name="Gariboldi M."/>
            <person name="Georgii-Hemming P."/>
            <person name="Gingeras T.R."/>
            <person name="Gojobori T."/>
            <person name="Green R.E."/>
            <person name="Gustincich S."/>
            <person name="Harbers M."/>
            <person name="Hayashi Y."/>
            <person name="Hensch T.K."/>
            <person name="Hirokawa N."/>
            <person name="Hill D."/>
            <person name="Huminiecki L."/>
            <person name="Iacono M."/>
            <person name="Ikeo K."/>
            <person name="Iwama A."/>
            <person name="Ishikawa T."/>
            <person name="Jakt M."/>
            <person name="Kanapin A."/>
            <person name="Katoh M."/>
            <person name="Kawasawa Y."/>
            <person name="Kelso J."/>
            <person name="Kitamura H."/>
            <person name="Kitano H."/>
            <person name="Kollias G."/>
            <person name="Krishnan S.P."/>
            <person name="Kruger A."/>
            <person name="Kummerfeld S.K."/>
            <person name="Kurochkin I.V."/>
            <person name="Lareau L.F."/>
            <person name="Lazarevic D."/>
            <person name="Lipovich L."/>
            <person name="Liu J."/>
            <person name="Liuni S."/>
            <person name="McWilliam S."/>
            <person name="Madan Babu M."/>
            <person name="Madera M."/>
            <person name="Marchionni L."/>
            <person name="Matsuda H."/>
            <person name="Matsuzawa S."/>
            <person name="Miki H."/>
            <person name="Mignone F."/>
            <person name="Miyake S."/>
            <person name="Morris K."/>
            <person name="Mottagui-Tabar S."/>
            <person name="Mulder N."/>
            <person name="Nakano N."/>
            <person name="Nakauchi H."/>
            <person name="Ng P."/>
            <person name="Nilsson R."/>
            <person name="Nishiguchi S."/>
            <person name="Nishikawa S."/>
            <person name="Nori F."/>
            <person name="Ohara O."/>
            <person name="Okazaki Y."/>
            <person name="Orlando V."/>
            <person name="Pang K.C."/>
            <person name="Pavan W.J."/>
            <person name="Pavesi G."/>
            <person name="Pesole G."/>
            <person name="Petrovsky N."/>
            <person name="Piazza S."/>
            <person name="Reed J."/>
            <person name="Reid J.F."/>
            <person name="Ring B.Z."/>
            <person name="Ringwald M."/>
            <person name="Rost B."/>
            <person name="Ruan Y."/>
            <person name="Salzberg S.L."/>
            <person name="Sandelin A."/>
            <person name="Schneider C."/>
            <person name="Schoenbach C."/>
            <person name="Sekiguchi K."/>
            <person name="Semple C.A."/>
            <person name="Seno S."/>
            <person name="Sessa L."/>
            <person name="Sheng Y."/>
            <person name="Shibata Y."/>
            <person name="Shimada H."/>
            <person name="Shimada K."/>
            <person name="Silva D."/>
            <person name="Sinclair B."/>
            <person name="Sperling S."/>
            <person name="Stupka E."/>
            <person name="Sugiura K."/>
            <person name="Sultana R."/>
            <person name="Takenaka Y."/>
            <person name="Taki K."/>
            <person name="Tammoja K."/>
            <person name="Tan S.L."/>
            <person name="Tang S."/>
            <person name="Taylor M.S."/>
            <person name="Tegner J."/>
            <person name="Teichmann S.A."/>
            <person name="Ueda H.R."/>
            <person name="van Nimwegen E."/>
            <person name="Verardo R."/>
            <person name="Wei C.L."/>
            <person name="Yagi K."/>
            <person name="Yamanishi H."/>
            <person name="Zabarovsky E."/>
            <person name="Zhu S."/>
            <person name="Zimmer A."/>
            <person name="Hide W."/>
            <person name="Bult C."/>
            <person name="Grimmond S.M."/>
            <person name="Teasdale R.D."/>
            <person name="Liu E.T."/>
            <person name="Brusic V."/>
            <person name="Quackenbush J."/>
            <person name="Wahlestedt C."/>
            <person name="Mattick J.S."/>
            <person name="Hume D.A."/>
            <person name="Kai C."/>
            <person name="Sasaki D."/>
            <person name="Tomaru Y."/>
            <person name="Fukuda S."/>
            <person name="Kanamori-Katayama M."/>
            <person name="Suzuki M."/>
            <person name="Aoki J."/>
            <person name="Arakawa T."/>
            <person name="Iida J."/>
            <person name="Imamura K."/>
            <person name="Itoh M."/>
            <person name="Kato T."/>
            <person name="Kawaji H."/>
            <person name="Kawagashira N."/>
            <person name="Kawashima T."/>
            <person name="Kojima M."/>
            <person name="Kondo S."/>
            <person name="Konno H."/>
            <person name="Nakano K."/>
            <person name="Ninomiya N."/>
            <person name="Nishio T."/>
            <person name="Okada M."/>
            <person name="Plessy C."/>
            <person name="Shibata K."/>
            <person name="Shiraki T."/>
            <person name="Suzuki S."/>
            <person name="Tagami M."/>
            <person name="Waki K."/>
            <person name="Watahiki A."/>
            <person name="Okamura-Oho Y."/>
            <person name="Suzuki H."/>
            <person name="Kawai J."/>
            <person name="Hayashizaki Y."/>
        </authorList>
    </citation>
    <scope>NUCLEOTIDE SEQUENCE [LARGE SCALE MRNA] (ISOFORMS 4 AND 5)</scope>
    <source>
        <strain>C57BL/6J</strain>
        <tissue>Embryonic spinal cord</tissue>
        <tissue>Skin</tissue>
    </source>
</reference>
<reference key="4">
    <citation type="journal article" date="2009" name="PLoS Biol.">
        <title>Lineage-specific biology revealed by a finished genome assembly of the mouse.</title>
        <authorList>
            <person name="Church D.M."/>
            <person name="Goodstadt L."/>
            <person name="Hillier L.W."/>
            <person name="Zody M.C."/>
            <person name="Goldstein S."/>
            <person name="She X."/>
            <person name="Bult C.J."/>
            <person name="Agarwala R."/>
            <person name="Cherry J.L."/>
            <person name="DiCuccio M."/>
            <person name="Hlavina W."/>
            <person name="Kapustin Y."/>
            <person name="Meric P."/>
            <person name="Maglott D."/>
            <person name="Birtle Z."/>
            <person name="Marques A.C."/>
            <person name="Graves T."/>
            <person name="Zhou S."/>
            <person name="Teague B."/>
            <person name="Potamousis K."/>
            <person name="Churas C."/>
            <person name="Place M."/>
            <person name="Herschleb J."/>
            <person name="Runnheim R."/>
            <person name="Forrest D."/>
            <person name="Amos-Landgraf J."/>
            <person name="Schwartz D.C."/>
            <person name="Cheng Z."/>
            <person name="Lindblad-Toh K."/>
            <person name="Eichler E.E."/>
            <person name="Ponting C.P."/>
        </authorList>
    </citation>
    <scope>NUCLEOTIDE SEQUENCE [LARGE SCALE GENOMIC DNA]</scope>
    <scope>ALTERNATIVE SPLICING</scope>
    <source>
        <strain>C57BL/6J</strain>
    </source>
</reference>
<reference key="5">
    <citation type="journal article" date="2004" name="Genome Res.">
        <title>The status, quality, and expansion of the NIH full-length cDNA project: the Mammalian Gene Collection (MGC).</title>
        <authorList>
            <consortium name="The MGC Project Team"/>
        </authorList>
    </citation>
    <scope>NUCLEOTIDE SEQUENCE [LARGE SCALE MRNA] OF 734-1337</scope>
    <source>
        <strain>C57BL/6J</strain>
        <strain>Czech II</strain>
        <tissue>Brain</tissue>
        <tissue>Mammary gland</tissue>
    </source>
</reference>
<reference key="6">
    <citation type="journal article" date="1995" name="Dev. Genet.">
        <title>Characterization of a gene trap insertion into a novel gene, cordon-bleu, expressed in axial structures of the gastrulating mouse embryo.</title>
        <authorList>
            <person name="Gasca S."/>
            <person name="Hill D.P."/>
            <person name="Klingensmith J."/>
            <person name="Rossant J."/>
        </authorList>
    </citation>
    <scope>NUCLEOTIDE SEQUENCE [MRNA] OF 64-448</scope>
    <scope>TISSUE SPECIFICITY</scope>
    <source>
        <strain>CD-1</strain>
        <tissue>Brain</tissue>
    </source>
</reference>
<reference key="7">
    <citation type="journal article" date="2004" name="Mol. Cell. Proteomics">
        <title>Phosphoproteomic analysis of the developing mouse brain.</title>
        <authorList>
            <person name="Ballif B.A."/>
            <person name="Villen J."/>
            <person name="Beausoleil S.A."/>
            <person name="Schwartz D."/>
            <person name="Gygi S.P."/>
        </authorList>
    </citation>
    <scope>IDENTIFICATION BY MASS SPECTROMETRY [LARGE SCALE ANALYSIS]</scope>
    <source>
        <tissue>Embryonic brain</tissue>
    </source>
</reference>
<reference key="8">
    <citation type="journal article" date="2007" name="Cell">
        <title>Cordon-bleu is an actin nucleation factor and controls neuronal morphology.</title>
        <authorList>
            <person name="Ahuja R."/>
            <person name="Pinyol R."/>
            <person name="Reichenbach N."/>
            <person name="Custer L."/>
            <person name="Klingensmith J."/>
            <person name="Kessels M.M."/>
            <person name="Qualmann B."/>
        </authorList>
    </citation>
    <scope>FUNCTION</scope>
    <scope>ACTIN-BINDING</scope>
    <scope>INTERACTION WITH PACSIN1 AND DBNL</scope>
    <scope>SUBCELLULAR LOCATION</scope>
    <scope>TISSUE SPECIFICITY</scope>
</reference>
<reference key="9">
    <citation type="journal article" date="2010" name="Cell">
        <title>A tissue-specific atlas of mouse protein phosphorylation and expression.</title>
        <authorList>
            <person name="Huttlin E.L."/>
            <person name="Jedrychowski M.P."/>
            <person name="Elias J.E."/>
            <person name="Goswami T."/>
            <person name="Rad R."/>
            <person name="Beausoleil S.A."/>
            <person name="Villen J."/>
            <person name="Haas W."/>
            <person name="Sowa M.E."/>
            <person name="Gygi S.P."/>
        </authorList>
    </citation>
    <scope>PHOSPHORYLATION [LARGE SCALE ANALYSIS] AT SER-47; SER-50; SER-272; THR-522 AND SER-1128</scope>
    <scope>IDENTIFICATION BY MASS SPECTROMETRY [LARGE SCALE ANALYSIS]</scope>
    <source>
        <tissue>Brain</tissue>
        <tissue>Heart</tissue>
        <tissue>Kidney</tissue>
        <tissue>Lung</tissue>
    </source>
</reference>
<reference key="10">
    <citation type="journal article" date="2012" name="J. Neurosci.">
        <title>The actin nucleator Cobl is crucial for Purkinje cell development and works in close conjunction with the F-actin binding protein Abp1.</title>
        <authorList>
            <person name="Haag N."/>
            <person name="Schwintzer L."/>
            <person name="Ahuja R."/>
            <person name="Koch N."/>
            <person name="Grimm J."/>
            <person name="Heuer H."/>
            <person name="Qualmann B."/>
            <person name="Kessels M.M."/>
        </authorList>
    </citation>
    <scope>FUNCTION</scope>
    <scope>INTERACTION WITH DBNL</scope>
    <scope>SUBCELLULAR LOCATION</scope>
    <scope>TISSUE SPECIFICITY</scope>
</reference>
<reference key="11">
    <citation type="journal article" date="2012" name="Biophys. J.">
        <title>Structural states and dynamics of the D-loop in actin.</title>
        <authorList>
            <person name="Durer Z.A."/>
            <person name="Kudryashov D.S."/>
            <person name="Sawaya M.R."/>
            <person name="Altenbach C."/>
            <person name="Hubbell W."/>
            <person name="Reisler E."/>
        </authorList>
    </citation>
    <scope>X-RAY CRYSTALLOGRAPHY (3.0 ANGSTROMS) OF 1201-1332 IN COMPLEX WITH ACTA1; GSN AND TMSB4X</scope>
    <scope>SUBUNIT</scope>
</reference>
<gene>
    <name type="primary">Cobl</name>
    <name type="synonym">Kiaa0633</name>
</gene>
<protein>
    <recommendedName>
        <fullName>Protein cordon-bleu</fullName>
    </recommendedName>
</protein>